<protein>
    <recommendedName>
        <fullName evidence="1">L-cysteine:1D-myo-inositol 2-amino-2-deoxy-alpha-D-glucopyranoside ligase</fullName>
        <shortName evidence="1">L-Cys:GlcN-Ins ligase</shortName>
        <ecNumber evidence="1">6.3.1.13</ecNumber>
    </recommendedName>
    <alternativeName>
        <fullName evidence="1">Mycothiol ligase</fullName>
        <shortName evidence="1">MSH ligase</shortName>
    </alternativeName>
</protein>
<keyword id="KW-0067">ATP-binding</keyword>
<keyword id="KW-0436">Ligase</keyword>
<keyword id="KW-0479">Metal-binding</keyword>
<keyword id="KW-0547">Nucleotide-binding</keyword>
<keyword id="KW-1185">Reference proteome</keyword>
<keyword id="KW-0862">Zinc</keyword>
<organism>
    <name type="scientific">Acidothermus cellulolyticus (strain ATCC 43068 / DSM 8971 / 11B)</name>
    <dbReference type="NCBI Taxonomy" id="351607"/>
    <lineage>
        <taxon>Bacteria</taxon>
        <taxon>Bacillati</taxon>
        <taxon>Actinomycetota</taxon>
        <taxon>Actinomycetes</taxon>
        <taxon>Acidothermales</taxon>
        <taxon>Acidothermaceae</taxon>
        <taxon>Acidothermus</taxon>
    </lineage>
</organism>
<reference key="1">
    <citation type="journal article" date="2009" name="Genome Res.">
        <title>Complete genome of the cellulolytic thermophile Acidothermus cellulolyticus 11B provides insights into its ecophysiological and evolutionary adaptations.</title>
        <authorList>
            <person name="Barabote R.D."/>
            <person name="Xie G."/>
            <person name="Leu D.H."/>
            <person name="Normand P."/>
            <person name="Necsulea A."/>
            <person name="Daubin V."/>
            <person name="Medigue C."/>
            <person name="Adney W.S."/>
            <person name="Xu X.C."/>
            <person name="Lapidus A."/>
            <person name="Parales R.E."/>
            <person name="Detter C."/>
            <person name="Pujic P."/>
            <person name="Bruce D."/>
            <person name="Lavire C."/>
            <person name="Challacombe J.F."/>
            <person name="Brettin T.S."/>
            <person name="Berry A.M."/>
        </authorList>
    </citation>
    <scope>NUCLEOTIDE SEQUENCE [LARGE SCALE GENOMIC DNA]</scope>
    <source>
        <strain>ATCC 43068 / DSM 8971 / 11B</strain>
    </source>
</reference>
<name>MSHC_ACIC1</name>
<evidence type="ECO:0000255" key="1">
    <source>
        <dbReference type="HAMAP-Rule" id="MF_01697"/>
    </source>
</evidence>
<feature type="chain" id="PRO_0000400426" description="L-cysteine:1D-myo-inositol 2-amino-2-deoxy-alpha-D-glucopyranoside ligase">
    <location>
        <begin position="1"/>
        <end position="403"/>
    </location>
</feature>
<feature type="short sequence motif" description="'HIGH' region" evidence="1">
    <location>
        <begin position="45"/>
        <end position="55"/>
    </location>
</feature>
<feature type="short sequence motif" description="'KMSKS' region" evidence="1">
    <location>
        <begin position="284"/>
        <end position="288"/>
    </location>
</feature>
<feature type="binding site" evidence="1">
    <location>
        <begin position="43"/>
        <end position="46"/>
    </location>
    <ligand>
        <name>L-cysteinyl-5'-AMP</name>
        <dbReference type="ChEBI" id="CHEBI:144924"/>
    </ligand>
</feature>
<feature type="binding site" evidence="1">
    <location>
        <position position="43"/>
    </location>
    <ligand>
        <name>Zn(2+)</name>
        <dbReference type="ChEBI" id="CHEBI:29105"/>
    </ligand>
</feature>
<feature type="binding site" evidence="1">
    <location>
        <position position="58"/>
    </location>
    <ligand>
        <name>L-cysteinyl-5'-AMP</name>
        <dbReference type="ChEBI" id="CHEBI:144924"/>
    </ligand>
</feature>
<feature type="binding site" evidence="1">
    <location>
        <begin position="81"/>
        <end position="83"/>
    </location>
    <ligand>
        <name>L-cysteinyl-5'-AMP</name>
        <dbReference type="ChEBI" id="CHEBI:144924"/>
    </ligand>
</feature>
<feature type="binding site" evidence="1">
    <location>
        <position position="223"/>
    </location>
    <ligand>
        <name>L-cysteinyl-5'-AMP</name>
        <dbReference type="ChEBI" id="CHEBI:144924"/>
    </ligand>
</feature>
<feature type="binding site" evidence="1">
    <location>
        <position position="227"/>
    </location>
    <ligand>
        <name>Zn(2+)</name>
        <dbReference type="ChEBI" id="CHEBI:29105"/>
    </ligand>
</feature>
<feature type="binding site" evidence="1">
    <location>
        <begin position="245"/>
        <end position="247"/>
    </location>
    <ligand>
        <name>L-cysteinyl-5'-AMP</name>
        <dbReference type="ChEBI" id="CHEBI:144924"/>
    </ligand>
</feature>
<feature type="binding site" evidence="1">
    <location>
        <position position="252"/>
    </location>
    <ligand>
        <name>Zn(2+)</name>
        <dbReference type="ChEBI" id="CHEBI:29105"/>
    </ligand>
</feature>
<feature type="binding site" evidence="1">
    <location>
        <position position="278"/>
    </location>
    <ligand>
        <name>L-cysteinyl-5'-AMP</name>
        <dbReference type="ChEBI" id="CHEBI:144924"/>
    </ligand>
</feature>
<gene>
    <name evidence="1" type="primary">mshC</name>
    <name type="ordered locus">Acel_1172</name>
</gene>
<dbReference type="EC" id="6.3.1.13" evidence="1"/>
<dbReference type="EMBL" id="CP000481">
    <property type="protein sequence ID" value="ABK52944.1"/>
    <property type="molecule type" value="Genomic_DNA"/>
</dbReference>
<dbReference type="RefSeq" id="WP_011720007.1">
    <property type="nucleotide sequence ID" value="NC_008578.1"/>
</dbReference>
<dbReference type="SMR" id="A0LU34"/>
<dbReference type="STRING" id="351607.Acel_1172"/>
<dbReference type="KEGG" id="ace:Acel_1172"/>
<dbReference type="eggNOG" id="COG0215">
    <property type="taxonomic scope" value="Bacteria"/>
</dbReference>
<dbReference type="HOGENOM" id="CLU_013528_0_0_11"/>
<dbReference type="InParanoid" id="A0LU34"/>
<dbReference type="OrthoDB" id="9815130at2"/>
<dbReference type="Proteomes" id="UP000008221">
    <property type="component" value="Chromosome"/>
</dbReference>
<dbReference type="GO" id="GO:0005829">
    <property type="term" value="C:cytosol"/>
    <property type="evidence" value="ECO:0007669"/>
    <property type="project" value="TreeGrafter"/>
</dbReference>
<dbReference type="GO" id="GO:0005524">
    <property type="term" value="F:ATP binding"/>
    <property type="evidence" value="ECO:0007669"/>
    <property type="project" value="UniProtKB-KW"/>
</dbReference>
<dbReference type="GO" id="GO:0035446">
    <property type="term" value="F:cysteine-glucosaminylinositol ligase activity"/>
    <property type="evidence" value="ECO:0007669"/>
    <property type="project" value="UniProtKB-UniRule"/>
</dbReference>
<dbReference type="GO" id="GO:0004817">
    <property type="term" value="F:cysteine-tRNA ligase activity"/>
    <property type="evidence" value="ECO:0007669"/>
    <property type="project" value="TreeGrafter"/>
</dbReference>
<dbReference type="GO" id="GO:0008270">
    <property type="term" value="F:zinc ion binding"/>
    <property type="evidence" value="ECO:0007669"/>
    <property type="project" value="UniProtKB-UniRule"/>
</dbReference>
<dbReference type="GO" id="GO:0006423">
    <property type="term" value="P:cysteinyl-tRNA aminoacylation"/>
    <property type="evidence" value="ECO:0007669"/>
    <property type="project" value="TreeGrafter"/>
</dbReference>
<dbReference type="GO" id="GO:0010125">
    <property type="term" value="P:mycothiol biosynthetic process"/>
    <property type="evidence" value="ECO:0007669"/>
    <property type="project" value="UniProtKB-UniRule"/>
</dbReference>
<dbReference type="CDD" id="cd00672">
    <property type="entry name" value="CysRS_core"/>
    <property type="match status" value="1"/>
</dbReference>
<dbReference type="Gene3D" id="1.20.120.640">
    <property type="entry name" value="Anticodon-binding domain of a subclass of class I aminoacyl-tRNA synthetases"/>
    <property type="match status" value="1"/>
</dbReference>
<dbReference type="Gene3D" id="3.40.50.620">
    <property type="entry name" value="HUPs"/>
    <property type="match status" value="1"/>
</dbReference>
<dbReference type="HAMAP" id="MF_01697">
    <property type="entry name" value="MshC"/>
    <property type="match status" value="1"/>
</dbReference>
<dbReference type="InterPro" id="IPR024909">
    <property type="entry name" value="Cys-tRNA/MSH_ligase"/>
</dbReference>
<dbReference type="InterPro" id="IPR017812">
    <property type="entry name" value="Mycothiol_ligase_MshC"/>
</dbReference>
<dbReference type="InterPro" id="IPR014729">
    <property type="entry name" value="Rossmann-like_a/b/a_fold"/>
</dbReference>
<dbReference type="InterPro" id="IPR032678">
    <property type="entry name" value="tRNA-synt_1_cat_dom"/>
</dbReference>
<dbReference type="NCBIfam" id="TIGR03447">
    <property type="entry name" value="mycothiol_MshC"/>
    <property type="match status" value="1"/>
</dbReference>
<dbReference type="PANTHER" id="PTHR10890:SF3">
    <property type="entry name" value="CYSTEINE--TRNA LIGASE, CYTOPLASMIC"/>
    <property type="match status" value="1"/>
</dbReference>
<dbReference type="PANTHER" id="PTHR10890">
    <property type="entry name" value="CYSTEINYL-TRNA SYNTHETASE"/>
    <property type="match status" value="1"/>
</dbReference>
<dbReference type="Pfam" id="PF01406">
    <property type="entry name" value="tRNA-synt_1e"/>
    <property type="match status" value="1"/>
</dbReference>
<dbReference type="PRINTS" id="PR00983">
    <property type="entry name" value="TRNASYNTHCYS"/>
</dbReference>
<dbReference type="SUPFAM" id="SSF52374">
    <property type="entry name" value="Nucleotidylyl transferase"/>
    <property type="match status" value="1"/>
</dbReference>
<proteinExistence type="inferred from homology"/>
<comment type="function">
    <text evidence="1">Catalyzes the ATP-dependent condensation of GlcN-Ins and L-cysteine to form L-Cys-GlcN-Ins.</text>
</comment>
<comment type="catalytic activity">
    <reaction evidence="1">
        <text>1D-myo-inositol 2-amino-2-deoxy-alpha-D-glucopyranoside + L-cysteine + ATP = 1D-myo-inositol 2-(L-cysteinylamino)-2-deoxy-alpha-D-glucopyranoside + AMP + diphosphate + H(+)</text>
        <dbReference type="Rhea" id="RHEA:26176"/>
        <dbReference type="ChEBI" id="CHEBI:15378"/>
        <dbReference type="ChEBI" id="CHEBI:30616"/>
        <dbReference type="ChEBI" id="CHEBI:33019"/>
        <dbReference type="ChEBI" id="CHEBI:35235"/>
        <dbReference type="ChEBI" id="CHEBI:58886"/>
        <dbReference type="ChEBI" id="CHEBI:58887"/>
        <dbReference type="ChEBI" id="CHEBI:456215"/>
        <dbReference type="EC" id="6.3.1.13"/>
    </reaction>
</comment>
<comment type="cofactor">
    <cofactor evidence="1">
        <name>Zn(2+)</name>
        <dbReference type="ChEBI" id="CHEBI:29105"/>
    </cofactor>
    <text evidence="1">Binds 1 zinc ion per subunit.</text>
</comment>
<comment type="subunit">
    <text evidence="1">Monomer.</text>
</comment>
<comment type="similarity">
    <text evidence="1">Belongs to the class-I aminoacyl-tRNA synthetase family. MshC subfamily.</text>
</comment>
<accession>A0LU34</accession>
<sequence>MHAWPAPKIPSLPGRNRLPSLFDTASRRLVTVGSQQGASMYVCGITPYDATHLGHAATYVAFDLLVRTWHDAGVTVRYAQNVTDVDDPLLERARQVDQPWEAIAARETAKFRADMAALRVVPPDRYVGVVESLPQIIGLIEVLRSRGLTYELDGDQYFATHAIPDFGAVSHLGRDDMIALFAARGGDPDRAGKKDPLDALLWRGKRPEEPSWPAPFGRGRPGWHVECAAIALTHLPLPLDVQGGGADLVFPHHDMTAAQAEAATGRRFARAYVHTGLVAYQGEKMSKSLGNLVFVSDLCAAGADPMAVRLALLDHHYRTEWEWTPRLLDEATDRLAEWRAAVRRPRGAPGDGLLAAVRDRLADDLDAPGAIALIDEWTTQDGDDPDAPTLVAAMADALLGVHL</sequence>